<dbReference type="EC" id="3.4.13.19"/>
<dbReference type="EMBL" id="AE004092">
    <property type="protein sequence ID" value="AAK34726.1"/>
    <property type="molecule type" value="Genomic_DNA"/>
</dbReference>
<dbReference type="EMBL" id="CP000017">
    <property type="protein sequence ID" value="AAZ52376.1"/>
    <property type="molecule type" value="Genomic_DNA"/>
</dbReference>
<dbReference type="RefSeq" id="NP_270005.1">
    <property type="nucleotide sequence ID" value="NC_002737.2"/>
</dbReference>
<dbReference type="SMR" id="Q99XS1"/>
<dbReference type="MEROPS" id="C69.002"/>
<dbReference type="PaxDb" id="1314-HKU360_01872"/>
<dbReference type="KEGG" id="spy:SPy_2066"/>
<dbReference type="KEGG" id="spz:M5005_Spy1758"/>
<dbReference type="PATRIC" id="fig|160490.10.peg.1792"/>
<dbReference type="HOGENOM" id="CLU_014823_0_1_9"/>
<dbReference type="OMA" id="NHNKNFV"/>
<dbReference type="Proteomes" id="UP000000750">
    <property type="component" value="Chromosome"/>
</dbReference>
<dbReference type="GO" id="GO:0070004">
    <property type="term" value="F:cysteine-type exopeptidase activity"/>
    <property type="evidence" value="ECO:0007669"/>
    <property type="project" value="InterPro"/>
</dbReference>
<dbReference type="GO" id="GO:0016805">
    <property type="term" value="F:dipeptidase activity"/>
    <property type="evidence" value="ECO:0007669"/>
    <property type="project" value="UniProtKB-KW"/>
</dbReference>
<dbReference type="GO" id="GO:0006508">
    <property type="term" value="P:proteolysis"/>
    <property type="evidence" value="ECO:0007669"/>
    <property type="project" value="UniProtKB-KW"/>
</dbReference>
<dbReference type="Gene3D" id="3.60.60.10">
    <property type="entry name" value="Penicillin V Acylase, Chain A"/>
    <property type="match status" value="1"/>
</dbReference>
<dbReference type="InterPro" id="IPR047804">
    <property type="entry name" value="C69_dipept_A-like"/>
</dbReference>
<dbReference type="InterPro" id="IPR005322">
    <property type="entry name" value="Peptidase_C69"/>
</dbReference>
<dbReference type="NCBIfam" id="NF033678">
    <property type="entry name" value="C69_fam_dipept"/>
    <property type="match status" value="1"/>
</dbReference>
<dbReference type="PANTHER" id="PTHR12994:SF17">
    <property type="entry name" value="LD30995P"/>
    <property type="match status" value="1"/>
</dbReference>
<dbReference type="PANTHER" id="PTHR12994">
    <property type="entry name" value="SECERNIN"/>
    <property type="match status" value="1"/>
</dbReference>
<dbReference type="Pfam" id="PF03577">
    <property type="entry name" value="Peptidase_C69"/>
    <property type="match status" value="1"/>
</dbReference>
<feature type="chain" id="PRO_0000220390" description="Probable dipeptidase B">
    <location>
        <begin position="1"/>
        <end position="498"/>
    </location>
</feature>
<feature type="active site" evidence="1">
    <location>
        <position position="26"/>
    </location>
</feature>
<sequence>MINKKISLGVLSILTAFSLQSVSYACTGFIIGKDLTKDGSLLYGRTEDLEPHHNKNFIVRLAKDNPAGEKWKDLSNGFEYPLPEHSYRYSAIPDVTPNKGVYDEAGFNEFGVSMSATVSASANDAIQKIDPYVKNGLAESSMTSVILPSVKTAREGVALIAKIVTEKGAAEGNIVTLADKDGIWYMEILSGHQYVAIKFPDDKYAVFPNTFYLGHVDFNDKENTIASEDVEKVAKKAKSYTEVDGKFHIAKSYNPPLNDANRSRSFSGIKSLDPDSKVTYKDSNYELLQSTDKTFSLEDAMKLQRNRFEGLDLKPLDQMALDGKGKPKSKKAVKGYAYPISNPNVMEAHIFQLKKDIPAELGGVMWLSIGSPRNAPYLPYLGNISRTYEAYQEKSTQYNDKSWYWTVSHINDLVAAHPKPFGTKVIDEMKGLEKTWIAEQDKSTKEISDLVVSDPKAAQEKADKISLDRAEKTFKRLKAIEAKLVKEKPKNKKGLNRS</sequence>
<keyword id="KW-0224">Dipeptidase</keyword>
<keyword id="KW-0378">Hydrolase</keyword>
<keyword id="KW-0645">Protease</keyword>
<keyword id="KW-1185">Reference proteome</keyword>
<organism>
    <name type="scientific">Streptococcus pyogenes serotype M1</name>
    <dbReference type="NCBI Taxonomy" id="301447"/>
    <lineage>
        <taxon>Bacteria</taxon>
        <taxon>Bacillati</taxon>
        <taxon>Bacillota</taxon>
        <taxon>Bacilli</taxon>
        <taxon>Lactobacillales</taxon>
        <taxon>Streptococcaceae</taxon>
        <taxon>Streptococcus</taxon>
    </lineage>
</organism>
<accession>Q99XS1</accession>
<accession>Q48W99</accession>
<gene>
    <name type="primary">pepDB</name>
    <name type="ordered locus">SPy_2066</name>
    <name type="ordered locus">M5005_Spy1758</name>
</gene>
<evidence type="ECO:0000255" key="1"/>
<evidence type="ECO:0000305" key="2"/>
<proteinExistence type="inferred from homology"/>
<name>PEPDB_STRP1</name>
<reference key="1">
    <citation type="journal article" date="2001" name="Proc. Natl. Acad. Sci. U.S.A.">
        <title>Complete genome sequence of an M1 strain of Streptococcus pyogenes.</title>
        <authorList>
            <person name="Ferretti J.J."/>
            <person name="McShan W.M."/>
            <person name="Ajdic D.J."/>
            <person name="Savic D.J."/>
            <person name="Savic G."/>
            <person name="Lyon K."/>
            <person name="Primeaux C."/>
            <person name="Sezate S."/>
            <person name="Suvorov A.N."/>
            <person name="Kenton S."/>
            <person name="Lai H.S."/>
            <person name="Lin S.P."/>
            <person name="Qian Y."/>
            <person name="Jia H.G."/>
            <person name="Najar F.Z."/>
            <person name="Ren Q."/>
            <person name="Zhu H."/>
            <person name="Song L."/>
            <person name="White J."/>
            <person name="Yuan X."/>
            <person name="Clifton S.W."/>
            <person name="Roe B.A."/>
            <person name="McLaughlin R.E."/>
        </authorList>
    </citation>
    <scope>NUCLEOTIDE SEQUENCE [LARGE SCALE GENOMIC DNA]</scope>
    <source>
        <strain>ATCC 700294 / SF370 / Serotype M1</strain>
    </source>
</reference>
<reference key="2">
    <citation type="journal article" date="2005" name="J. Infect. Dis.">
        <title>Evolutionary origin and emergence of a highly successful clone of serotype M1 group A Streptococcus involved multiple horizontal gene transfer events.</title>
        <authorList>
            <person name="Sumby P."/>
            <person name="Porcella S.F."/>
            <person name="Madrigal A.G."/>
            <person name="Barbian K.D."/>
            <person name="Virtaneva K."/>
            <person name="Ricklefs S.M."/>
            <person name="Sturdevant D.E."/>
            <person name="Graham M.R."/>
            <person name="Vuopio-Varkila J."/>
            <person name="Hoe N.P."/>
            <person name="Musser J.M."/>
        </authorList>
    </citation>
    <scope>NUCLEOTIDE SEQUENCE [LARGE SCALE GENOMIC DNA]</scope>
    <source>
        <strain>ATCC BAA-947 / MGAS5005 / Serotype M1</strain>
    </source>
</reference>
<comment type="catalytic activity">
    <reaction>
        <text>an L-aminoacyl-L-amino acid + H2O = 2 an L-alpha-amino acid</text>
        <dbReference type="Rhea" id="RHEA:48940"/>
        <dbReference type="ChEBI" id="CHEBI:15377"/>
        <dbReference type="ChEBI" id="CHEBI:59869"/>
        <dbReference type="ChEBI" id="CHEBI:77460"/>
        <dbReference type="EC" id="3.4.13.19"/>
    </reaction>
</comment>
<comment type="similarity">
    <text evidence="2">Belongs to the peptidase C69 family.</text>
</comment>
<protein>
    <recommendedName>
        <fullName>Probable dipeptidase B</fullName>
        <ecNumber>3.4.13.19</ecNumber>
    </recommendedName>
</protein>